<reference key="1">
    <citation type="journal article" date="2002" name="Nat. Biotechnol.">
        <title>Genome sequence of the dissimilatory metal ion-reducing bacterium Shewanella oneidensis.</title>
        <authorList>
            <person name="Heidelberg J.F."/>
            <person name="Paulsen I.T."/>
            <person name="Nelson K.E."/>
            <person name="Gaidos E.J."/>
            <person name="Nelson W.C."/>
            <person name="Read T.D."/>
            <person name="Eisen J.A."/>
            <person name="Seshadri R."/>
            <person name="Ward N.L."/>
            <person name="Methe B.A."/>
            <person name="Clayton R.A."/>
            <person name="Meyer T."/>
            <person name="Tsapin A."/>
            <person name="Scott J."/>
            <person name="Beanan M.J."/>
            <person name="Brinkac L.M."/>
            <person name="Daugherty S.C."/>
            <person name="DeBoy R.T."/>
            <person name="Dodson R.J."/>
            <person name="Durkin A.S."/>
            <person name="Haft D.H."/>
            <person name="Kolonay J.F."/>
            <person name="Madupu R."/>
            <person name="Peterson J.D."/>
            <person name="Umayam L.A."/>
            <person name="White O."/>
            <person name="Wolf A.M."/>
            <person name="Vamathevan J.J."/>
            <person name="Weidman J.F."/>
            <person name="Impraim M."/>
            <person name="Lee K."/>
            <person name="Berry K.J."/>
            <person name="Lee C."/>
            <person name="Mueller J."/>
            <person name="Khouri H.M."/>
            <person name="Gill J."/>
            <person name="Utterback T.R."/>
            <person name="McDonald L.A."/>
            <person name="Feldblyum T.V."/>
            <person name="Smith H.O."/>
            <person name="Venter J.C."/>
            <person name="Nealson K.H."/>
            <person name="Fraser C.M."/>
        </authorList>
    </citation>
    <scope>NUCLEOTIDE SEQUENCE [LARGE SCALE GENOMIC DNA]</scope>
    <source>
        <strain>ATCC 700550 / JCM 31522 / CIP 106686 / LMG 19005 / NCIMB 14063 / MR-1</strain>
    </source>
</reference>
<organism>
    <name type="scientific">Shewanella oneidensis (strain ATCC 700550 / JCM 31522 / CIP 106686 / LMG 19005 / NCIMB 14063 / MR-1)</name>
    <dbReference type="NCBI Taxonomy" id="211586"/>
    <lineage>
        <taxon>Bacteria</taxon>
        <taxon>Pseudomonadati</taxon>
        <taxon>Pseudomonadota</taxon>
        <taxon>Gammaproteobacteria</taxon>
        <taxon>Alteromonadales</taxon>
        <taxon>Shewanellaceae</taxon>
        <taxon>Shewanella</taxon>
    </lineage>
</organism>
<keyword id="KW-0963">Cytoplasm</keyword>
<keyword id="KW-0664">Pyridoxine biosynthesis</keyword>
<keyword id="KW-1185">Reference proteome</keyword>
<keyword id="KW-0808">Transferase</keyword>
<name>PDXJ_SHEON</name>
<protein>
    <recommendedName>
        <fullName evidence="1">Pyridoxine 5'-phosphate synthase</fullName>
        <shortName evidence="1">PNP synthase</shortName>
        <ecNumber evidence="1">2.6.99.2</ecNumber>
    </recommendedName>
</protein>
<sequence length="245" mass="26560">MSRILLGVNIDHIATLRQARGTSYPDPVHAAAVAEHAGADGITIHLREDRRHIIDRDVYLLAKTLKTRMNFECAVTEEMLNIACEVKPTYVCLVPEKRQEVTTEGGLDVAGQLDKITAAVSRLAANGIQVSLFIDADKTQIDAAVASGAPLIEIHTGCYADAKTADEEAKELERIREMAKYAHGKGLIVNAGHGLHYHNVKPIAAIPELYELNIGHAIVARAAIDGLATAVKDMKTLMLEGRRGE</sequence>
<comment type="function">
    <text evidence="1">Catalyzes the complicated ring closure reaction between the two acyclic compounds 1-deoxy-D-xylulose-5-phosphate (DXP) and 3-amino-2-oxopropyl phosphate (1-amino-acetone-3-phosphate or AAP) to form pyridoxine 5'-phosphate (PNP) and inorganic phosphate.</text>
</comment>
<comment type="catalytic activity">
    <reaction evidence="1">
        <text>3-amino-2-oxopropyl phosphate + 1-deoxy-D-xylulose 5-phosphate = pyridoxine 5'-phosphate + phosphate + 2 H2O + H(+)</text>
        <dbReference type="Rhea" id="RHEA:15265"/>
        <dbReference type="ChEBI" id="CHEBI:15377"/>
        <dbReference type="ChEBI" id="CHEBI:15378"/>
        <dbReference type="ChEBI" id="CHEBI:43474"/>
        <dbReference type="ChEBI" id="CHEBI:57279"/>
        <dbReference type="ChEBI" id="CHEBI:57792"/>
        <dbReference type="ChEBI" id="CHEBI:58589"/>
        <dbReference type="EC" id="2.6.99.2"/>
    </reaction>
</comment>
<comment type="pathway">
    <text evidence="1">Cofactor biosynthesis; pyridoxine 5'-phosphate biosynthesis; pyridoxine 5'-phosphate from D-erythrose 4-phosphate: step 5/5.</text>
</comment>
<comment type="subunit">
    <text evidence="1">Homooctamer; tetramer of dimers.</text>
</comment>
<comment type="subcellular location">
    <subcellularLocation>
        <location evidence="1">Cytoplasm</location>
    </subcellularLocation>
</comment>
<comment type="similarity">
    <text evidence="1">Belongs to the PNP synthase family.</text>
</comment>
<proteinExistence type="inferred from homology"/>
<accession>Q8EH78</accession>
<gene>
    <name evidence="1" type="primary">pdxJ</name>
    <name type="ordered locus">SO_1351</name>
</gene>
<feature type="chain" id="PRO_0000190131" description="Pyridoxine 5'-phosphate synthase">
    <location>
        <begin position="1"/>
        <end position="245"/>
    </location>
</feature>
<feature type="active site" description="Proton acceptor" evidence="1">
    <location>
        <position position="45"/>
    </location>
</feature>
<feature type="active site" description="Proton acceptor" evidence="1">
    <location>
        <position position="72"/>
    </location>
</feature>
<feature type="active site" description="Proton donor" evidence="1">
    <location>
        <position position="193"/>
    </location>
</feature>
<feature type="binding site" evidence="1">
    <location>
        <position position="9"/>
    </location>
    <ligand>
        <name>3-amino-2-oxopropyl phosphate</name>
        <dbReference type="ChEBI" id="CHEBI:57279"/>
    </ligand>
</feature>
<feature type="binding site" evidence="1">
    <location>
        <begin position="11"/>
        <end position="12"/>
    </location>
    <ligand>
        <name>1-deoxy-D-xylulose 5-phosphate</name>
        <dbReference type="ChEBI" id="CHEBI:57792"/>
    </ligand>
</feature>
<feature type="binding site" evidence="1">
    <location>
        <position position="20"/>
    </location>
    <ligand>
        <name>3-amino-2-oxopropyl phosphate</name>
        <dbReference type="ChEBI" id="CHEBI:57279"/>
    </ligand>
</feature>
<feature type="binding site" evidence="1">
    <location>
        <position position="47"/>
    </location>
    <ligand>
        <name>1-deoxy-D-xylulose 5-phosphate</name>
        <dbReference type="ChEBI" id="CHEBI:57792"/>
    </ligand>
</feature>
<feature type="binding site" evidence="1">
    <location>
        <position position="52"/>
    </location>
    <ligand>
        <name>1-deoxy-D-xylulose 5-phosphate</name>
        <dbReference type="ChEBI" id="CHEBI:57792"/>
    </ligand>
</feature>
<feature type="binding site" evidence="1">
    <location>
        <position position="102"/>
    </location>
    <ligand>
        <name>1-deoxy-D-xylulose 5-phosphate</name>
        <dbReference type="ChEBI" id="CHEBI:57792"/>
    </ligand>
</feature>
<feature type="binding site" evidence="1">
    <location>
        <position position="194"/>
    </location>
    <ligand>
        <name>3-amino-2-oxopropyl phosphate</name>
        <dbReference type="ChEBI" id="CHEBI:57279"/>
    </ligand>
</feature>
<feature type="binding site" evidence="1">
    <location>
        <begin position="215"/>
        <end position="216"/>
    </location>
    <ligand>
        <name>3-amino-2-oxopropyl phosphate</name>
        <dbReference type="ChEBI" id="CHEBI:57279"/>
    </ligand>
</feature>
<feature type="site" description="Transition state stabilizer" evidence="1">
    <location>
        <position position="153"/>
    </location>
</feature>
<dbReference type="EC" id="2.6.99.2" evidence="1"/>
<dbReference type="EMBL" id="AE014299">
    <property type="protein sequence ID" value="AAN54416.1"/>
    <property type="molecule type" value="Genomic_DNA"/>
</dbReference>
<dbReference type="RefSeq" id="NP_716971.1">
    <property type="nucleotide sequence ID" value="NC_004347.2"/>
</dbReference>
<dbReference type="RefSeq" id="WP_011071560.1">
    <property type="nucleotide sequence ID" value="NC_004347.2"/>
</dbReference>
<dbReference type="SMR" id="Q8EH78"/>
<dbReference type="STRING" id="211586.SO_1351"/>
<dbReference type="PaxDb" id="211586-SO_1351"/>
<dbReference type="KEGG" id="son:SO_1351"/>
<dbReference type="PATRIC" id="fig|211586.12.peg.1300"/>
<dbReference type="eggNOG" id="COG0854">
    <property type="taxonomic scope" value="Bacteria"/>
</dbReference>
<dbReference type="HOGENOM" id="CLU_074563_0_0_6"/>
<dbReference type="OrthoDB" id="9806590at2"/>
<dbReference type="PhylomeDB" id="Q8EH78"/>
<dbReference type="BioCyc" id="SONE211586:G1GMP-1249-MONOMER"/>
<dbReference type="UniPathway" id="UPA00244">
    <property type="reaction ID" value="UER00313"/>
</dbReference>
<dbReference type="Proteomes" id="UP000008186">
    <property type="component" value="Chromosome"/>
</dbReference>
<dbReference type="GO" id="GO:0005829">
    <property type="term" value="C:cytosol"/>
    <property type="evidence" value="ECO:0000318"/>
    <property type="project" value="GO_Central"/>
</dbReference>
<dbReference type="GO" id="GO:0033856">
    <property type="term" value="F:pyridoxine 5'-phosphate synthase activity"/>
    <property type="evidence" value="ECO:0000318"/>
    <property type="project" value="GO_Central"/>
</dbReference>
<dbReference type="GO" id="GO:0008615">
    <property type="term" value="P:pyridoxine biosynthetic process"/>
    <property type="evidence" value="ECO:0000318"/>
    <property type="project" value="GO_Central"/>
</dbReference>
<dbReference type="CDD" id="cd00003">
    <property type="entry name" value="PNPsynthase"/>
    <property type="match status" value="1"/>
</dbReference>
<dbReference type="FunFam" id="3.20.20.70:FF:000042">
    <property type="entry name" value="Pyridoxine 5'-phosphate synthase"/>
    <property type="match status" value="1"/>
</dbReference>
<dbReference type="Gene3D" id="3.20.20.70">
    <property type="entry name" value="Aldolase class I"/>
    <property type="match status" value="1"/>
</dbReference>
<dbReference type="HAMAP" id="MF_00279">
    <property type="entry name" value="PdxJ"/>
    <property type="match status" value="1"/>
</dbReference>
<dbReference type="InterPro" id="IPR013785">
    <property type="entry name" value="Aldolase_TIM"/>
</dbReference>
<dbReference type="InterPro" id="IPR004569">
    <property type="entry name" value="PyrdxlP_synth_PdxJ"/>
</dbReference>
<dbReference type="InterPro" id="IPR036130">
    <property type="entry name" value="Pyridoxine-5'_phos_synth"/>
</dbReference>
<dbReference type="NCBIfam" id="TIGR00559">
    <property type="entry name" value="pdxJ"/>
    <property type="match status" value="1"/>
</dbReference>
<dbReference type="NCBIfam" id="NF003623">
    <property type="entry name" value="PRK05265.1-1"/>
    <property type="match status" value="1"/>
</dbReference>
<dbReference type="NCBIfam" id="NF003624">
    <property type="entry name" value="PRK05265.1-2"/>
    <property type="match status" value="1"/>
</dbReference>
<dbReference type="NCBIfam" id="NF003625">
    <property type="entry name" value="PRK05265.1-3"/>
    <property type="match status" value="1"/>
</dbReference>
<dbReference type="NCBIfam" id="NF003627">
    <property type="entry name" value="PRK05265.1-5"/>
    <property type="match status" value="1"/>
</dbReference>
<dbReference type="PANTHER" id="PTHR30456">
    <property type="entry name" value="PYRIDOXINE 5'-PHOSPHATE SYNTHASE"/>
    <property type="match status" value="1"/>
</dbReference>
<dbReference type="PANTHER" id="PTHR30456:SF0">
    <property type="entry name" value="PYRIDOXINE 5'-PHOSPHATE SYNTHASE"/>
    <property type="match status" value="1"/>
</dbReference>
<dbReference type="Pfam" id="PF03740">
    <property type="entry name" value="PdxJ"/>
    <property type="match status" value="1"/>
</dbReference>
<dbReference type="SUPFAM" id="SSF63892">
    <property type="entry name" value="Pyridoxine 5'-phosphate synthase"/>
    <property type="match status" value="1"/>
</dbReference>
<evidence type="ECO:0000255" key="1">
    <source>
        <dbReference type="HAMAP-Rule" id="MF_00279"/>
    </source>
</evidence>